<proteinExistence type="inferred from homology"/>
<gene>
    <name evidence="1" type="primary">rplT</name>
    <name type="ordered locus">BCA_4682</name>
</gene>
<accession>C1EUR7</accession>
<protein>
    <recommendedName>
        <fullName evidence="1">Large ribosomal subunit protein bL20</fullName>
    </recommendedName>
    <alternativeName>
        <fullName evidence="2">50S ribosomal protein L20</fullName>
    </alternativeName>
</protein>
<comment type="function">
    <text evidence="1">Binds directly to 23S ribosomal RNA and is necessary for the in vitro assembly process of the 50S ribosomal subunit. It is not involved in the protein synthesizing functions of that subunit.</text>
</comment>
<comment type="similarity">
    <text evidence="1">Belongs to the bacterial ribosomal protein bL20 family.</text>
</comment>
<keyword id="KW-0687">Ribonucleoprotein</keyword>
<keyword id="KW-0689">Ribosomal protein</keyword>
<keyword id="KW-0694">RNA-binding</keyword>
<keyword id="KW-0699">rRNA-binding</keyword>
<reference key="1">
    <citation type="submission" date="2009-02" db="EMBL/GenBank/DDBJ databases">
        <title>Genome sequence of Bacillus cereus 03BB102.</title>
        <authorList>
            <person name="Dodson R.J."/>
            <person name="Jackson P."/>
            <person name="Munk A.C."/>
            <person name="Brettin T."/>
            <person name="Bruce D."/>
            <person name="Detter C."/>
            <person name="Tapia R."/>
            <person name="Han C."/>
            <person name="Sutton G."/>
            <person name="Sims D."/>
        </authorList>
    </citation>
    <scope>NUCLEOTIDE SEQUENCE [LARGE SCALE GENOMIC DNA]</scope>
    <source>
        <strain>03BB102</strain>
    </source>
</reference>
<organism>
    <name type="scientific">Bacillus cereus (strain 03BB102)</name>
    <dbReference type="NCBI Taxonomy" id="572264"/>
    <lineage>
        <taxon>Bacteria</taxon>
        <taxon>Bacillati</taxon>
        <taxon>Bacillota</taxon>
        <taxon>Bacilli</taxon>
        <taxon>Bacillales</taxon>
        <taxon>Bacillaceae</taxon>
        <taxon>Bacillus</taxon>
        <taxon>Bacillus cereus group</taxon>
    </lineage>
</organism>
<feature type="chain" id="PRO_1000193936" description="Large ribosomal subunit protein bL20">
    <location>
        <begin position="1"/>
        <end position="118"/>
    </location>
</feature>
<dbReference type="EMBL" id="CP001407">
    <property type="protein sequence ID" value="ACO30954.1"/>
    <property type="molecule type" value="Genomic_DNA"/>
</dbReference>
<dbReference type="RefSeq" id="WP_001138362.1">
    <property type="nucleotide sequence ID" value="NZ_CP009318.1"/>
</dbReference>
<dbReference type="SMR" id="C1EUR7"/>
<dbReference type="GeneID" id="93006537"/>
<dbReference type="KEGG" id="bcx:BCA_4682"/>
<dbReference type="PATRIC" id="fig|572264.18.peg.4631"/>
<dbReference type="Proteomes" id="UP000002210">
    <property type="component" value="Chromosome"/>
</dbReference>
<dbReference type="GO" id="GO:1990904">
    <property type="term" value="C:ribonucleoprotein complex"/>
    <property type="evidence" value="ECO:0007669"/>
    <property type="project" value="UniProtKB-KW"/>
</dbReference>
<dbReference type="GO" id="GO:0005840">
    <property type="term" value="C:ribosome"/>
    <property type="evidence" value="ECO:0007669"/>
    <property type="project" value="UniProtKB-KW"/>
</dbReference>
<dbReference type="GO" id="GO:0019843">
    <property type="term" value="F:rRNA binding"/>
    <property type="evidence" value="ECO:0007669"/>
    <property type="project" value="UniProtKB-UniRule"/>
</dbReference>
<dbReference type="GO" id="GO:0003735">
    <property type="term" value="F:structural constituent of ribosome"/>
    <property type="evidence" value="ECO:0007669"/>
    <property type="project" value="InterPro"/>
</dbReference>
<dbReference type="GO" id="GO:0000027">
    <property type="term" value="P:ribosomal large subunit assembly"/>
    <property type="evidence" value="ECO:0007669"/>
    <property type="project" value="UniProtKB-UniRule"/>
</dbReference>
<dbReference type="GO" id="GO:0006412">
    <property type="term" value="P:translation"/>
    <property type="evidence" value="ECO:0007669"/>
    <property type="project" value="InterPro"/>
</dbReference>
<dbReference type="CDD" id="cd07026">
    <property type="entry name" value="Ribosomal_L20"/>
    <property type="match status" value="1"/>
</dbReference>
<dbReference type="FunFam" id="1.10.1900.20:FF:000001">
    <property type="entry name" value="50S ribosomal protein L20"/>
    <property type="match status" value="1"/>
</dbReference>
<dbReference type="Gene3D" id="6.10.160.10">
    <property type="match status" value="1"/>
</dbReference>
<dbReference type="Gene3D" id="1.10.1900.20">
    <property type="entry name" value="Ribosomal protein L20"/>
    <property type="match status" value="1"/>
</dbReference>
<dbReference type="HAMAP" id="MF_00382">
    <property type="entry name" value="Ribosomal_bL20"/>
    <property type="match status" value="1"/>
</dbReference>
<dbReference type="InterPro" id="IPR005813">
    <property type="entry name" value="Ribosomal_bL20"/>
</dbReference>
<dbReference type="InterPro" id="IPR049946">
    <property type="entry name" value="RIBOSOMAL_L20_CS"/>
</dbReference>
<dbReference type="InterPro" id="IPR035566">
    <property type="entry name" value="Ribosomal_protein_bL20_C"/>
</dbReference>
<dbReference type="NCBIfam" id="TIGR01032">
    <property type="entry name" value="rplT_bact"/>
    <property type="match status" value="1"/>
</dbReference>
<dbReference type="PANTHER" id="PTHR10986">
    <property type="entry name" value="39S RIBOSOMAL PROTEIN L20"/>
    <property type="match status" value="1"/>
</dbReference>
<dbReference type="Pfam" id="PF00453">
    <property type="entry name" value="Ribosomal_L20"/>
    <property type="match status" value="1"/>
</dbReference>
<dbReference type="PRINTS" id="PR00062">
    <property type="entry name" value="RIBOSOMALL20"/>
</dbReference>
<dbReference type="SUPFAM" id="SSF74731">
    <property type="entry name" value="Ribosomal protein L20"/>
    <property type="match status" value="1"/>
</dbReference>
<dbReference type="PROSITE" id="PS00937">
    <property type="entry name" value="RIBOSOMAL_L20"/>
    <property type="match status" value="1"/>
</dbReference>
<evidence type="ECO:0000255" key="1">
    <source>
        <dbReference type="HAMAP-Rule" id="MF_00382"/>
    </source>
</evidence>
<evidence type="ECO:0000305" key="2"/>
<sequence>MPRVKGGTVTRQRRKKVIKLAKGYYGSKNTLFKVANQQVMKSLMYAFRDRRQKKRDFRKLWITRINAAARMNGLSYSRLMHGLKNAGIEVNRKMLADLAVHDEKAFAELATVAKNNIN</sequence>
<name>RL20_BACC3</name>